<proteinExistence type="evidence at protein level"/>
<feature type="chain" id="PRO_0000079121" description="Nucleoprotein">
    <location>
        <begin position="1"/>
        <end position="498"/>
    </location>
</feature>
<feature type="region of interest" description="Disordered" evidence="2">
    <location>
        <begin position="1"/>
        <end position="21"/>
    </location>
</feature>
<feature type="short sequence motif" description="Unconventional nuclear localization signal" evidence="1">
    <location>
        <begin position="1"/>
        <end position="18"/>
    </location>
</feature>
<feature type="short sequence motif" description="Bipartite nuclear localization signal" evidence="1">
    <location>
        <begin position="198"/>
        <end position="216"/>
    </location>
</feature>
<protein>
    <recommendedName>
        <fullName evidence="1">Nucleoprotein</fullName>
    </recommendedName>
    <alternativeName>
        <fullName evidence="1">Nucleocapsid protein</fullName>
        <shortName evidence="1">Protein N</shortName>
    </alternativeName>
</protein>
<organism>
    <name type="scientific">Influenza A virus (strain A/Swine/Hong Kong/126/1982 H3N2)</name>
    <dbReference type="NCBI Taxonomy" id="382848"/>
    <lineage>
        <taxon>Viruses</taxon>
        <taxon>Riboviria</taxon>
        <taxon>Orthornavirae</taxon>
        <taxon>Negarnaviricota</taxon>
        <taxon>Polyploviricotina</taxon>
        <taxon>Insthoviricetes</taxon>
        <taxon>Articulavirales</taxon>
        <taxon>Orthomyxoviridae</taxon>
        <taxon>Alphainfluenzavirus</taxon>
        <taxon>Alphainfluenzavirus influenzae</taxon>
        <taxon>Influenza A virus</taxon>
    </lineage>
</organism>
<dbReference type="EMBL" id="M63771">
    <property type="protein sequence ID" value="AAA52270.1"/>
    <property type="molecule type" value="Genomic_RNA"/>
</dbReference>
<dbReference type="PDB" id="1HOC">
    <property type="method" value="X-ray"/>
    <property type="resolution" value="2.40 A"/>
    <property type="chains" value="C=366-374"/>
</dbReference>
<dbReference type="PDBsum" id="1HOC"/>
<dbReference type="SMR" id="P26091"/>
<dbReference type="EvolutionaryTrace" id="P26091"/>
<dbReference type="GO" id="GO:0019029">
    <property type="term" value="C:helical viral capsid"/>
    <property type="evidence" value="ECO:0007669"/>
    <property type="project" value="UniProtKB-UniRule"/>
</dbReference>
<dbReference type="GO" id="GO:0043657">
    <property type="term" value="C:host cell"/>
    <property type="evidence" value="ECO:0007669"/>
    <property type="project" value="GOC"/>
</dbReference>
<dbReference type="GO" id="GO:0042025">
    <property type="term" value="C:host cell nucleus"/>
    <property type="evidence" value="ECO:0007669"/>
    <property type="project" value="UniProtKB-SubCell"/>
</dbReference>
<dbReference type="GO" id="GO:1990904">
    <property type="term" value="C:ribonucleoprotein complex"/>
    <property type="evidence" value="ECO:0007669"/>
    <property type="project" value="UniProtKB-KW"/>
</dbReference>
<dbReference type="GO" id="GO:0019013">
    <property type="term" value="C:viral nucleocapsid"/>
    <property type="evidence" value="ECO:0007669"/>
    <property type="project" value="UniProtKB-UniRule"/>
</dbReference>
<dbReference type="GO" id="GO:0003723">
    <property type="term" value="F:RNA binding"/>
    <property type="evidence" value="ECO:0007669"/>
    <property type="project" value="UniProtKB-UniRule"/>
</dbReference>
<dbReference type="GO" id="GO:0005198">
    <property type="term" value="F:structural molecule activity"/>
    <property type="evidence" value="ECO:0007669"/>
    <property type="project" value="UniProtKB-UniRule"/>
</dbReference>
<dbReference type="GO" id="GO:0046718">
    <property type="term" value="P:symbiont entry into host cell"/>
    <property type="evidence" value="ECO:0007669"/>
    <property type="project" value="UniProtKB-KW"/>
</dbReference>
<dbReference type="GO" id="GO:0075732">
    <property type="term" value="P:viral penetration into host nucleus"/>
    <property type="evidence" value="ECO:0007669"/>
    <property type="project" value="UniProtKB-UniRule"/>
</dbReference>
<dbReference type="HAMAP" id="MF_04070">
    <property type="entry name" value="INFV_NCAP"/>
    <property type="match status" value="1"/>
</dbReference>
<dbReference type="InterPro" id="IPR002141">
    <property type="entry name" value="Flu_NP"/>
</dbReference>
<dbReference type="Pfam" id="PF00506">
    <property type="entry name" value="Flu_NP"/>
    <property type="match status" value="1"/>
</dbReference>
<dbReference type="SUPFAM" id="SSF161003">
    <property type="entry name" value="flu NP-like"/>
    <property type="match status" value="1"/>
</dbReference>
<organismHost>
    <name type="scientific">Aves</name>
    <dbReference type="NCBI Taxonomy" id="8782"/>
</organismHost>
<organismHost>
    <name type="scientific">Cetacea</name>
    <name type="common">whales</name>
    <dbReference type="NCBI Taxonomy" id="9721"/>
</organismHost>
<organismHost>
    <name type="scientific">Homo sapiens</name>
    <name type="common">Human</name>
    <dbReference type="NCBI Taxonomy" id="9606"/>
</organismHost>
<organismHost>
    <name type="scientific">Phocidae</name>
    <name type="common">true seals</name>
    <dbReference type="NCBI Taxonomy" id="9709"/>
</organismHost>
<organismHost>
    <name type="scientific">Sus scrofa</name>
    <name type="common">Pig</name>
    <dbReference type="NCBI Taxonomy" id="9823"/>
</organismHost>
<comment type="function">
    <text evidence="1">Encapsidates the negative strand viral RNA, protecting it from nucleases. The encapsidated genomic RNA is termed the ribonucleoprotein (RNP) and serves as template for transcription and replication. The RNP needs to be localized in the host nucleus to start an infectious cycle, but is too large to diffuse through the nuclear pore complex. NP comprises at least 2 nuclear localization signals that are responsible for the active RNP import into the nucleus through cellular importin alpha/beta pathway. Later in the infection, nclear export of RNPs are mediated through viral proteins NEP interacting with M1 which binds nucleoproteins. It is possible that nucleoprotein binds directly host exportin-1/XPO1 and plays an active role in RNPs nuclear export. M1 interaction with RNP seems to hide nucleoprotein's nuclear localization signals. Soon after a virion infects a new cell, M1 dissociates from the RNP under acidification of the virion driven by M2 protein. Dissociation of M1 from RNP unmasks nucleoprotein's nuclear localization signals, targeting the RNP to the nucleus.</text>
</comment>
<comment type="subunit">
    <text evidence="1">Homomultimerizes to form the nucleocapsid. May bind host exportin-1/XPO1. Binds to viral genomic RNA. Protein-RNA contacts are mediated by a combination of electrostatic interactions between positively charged residues and the phosphate backbone and planar interactions between aromatic side chains and bases.</text>
</comment>
<comment type="subcellular location">
    <subcellularLocation>
        <location evidence="1">Virion</location>
    </subcellularLocation>
    <subcellularLocation>
        <location evidence="1">Host nucleus</location>
    </subcellularLocation>
</comment>
<comment type="PTM">
    <text evidence="1">Late in virus-infected cells, may be cleaved from a 56-kDa protein to a 53-kDa protein by a cellular caspase. This cleavage might be a marker for the onset of apoptosis in infected cells or have a specific function in virus host interaction.</text>
</comment>
<comment type="similarity">
    <text evidence="1">Belongs to the influenza viruses nucleoprotein family.</text>
</comment>
<name>NCAP_I82A4</name>
<keyword id="KW-0002">3D-structure</keyword>
<keyword id="KW-0167">Capsid protein</keyword>
<keyword id="KW-1139">Helical capsid protein</keyword>
<keyword id="KW-1048">Host nucleus</keyword>
<keyword id="KW-0945">Host-virus interaction</keyword>
<keyword id="KW-0687">Ribonucleoprotein</keyword>
<keyword id="KW-0694">RNA-binding</keyword>
<keyword id="KW-0543">Viral nucleoprotein</keyword>
<keyword id="KW-1163">Viral penetration into host nucleus</keyword>
<keyword id="KW-0946">Virion</keyword>
<keyword id="KW-1160">Virus entry into host cell</keyword>
<evidence type="ECO:0000255" key="1">
    <source>
        <dbReference type="HAMAP-Rule" id="MF_04070"/>
    </source>
</evidence>
<evidence type="ECO:0000256" key="2">
    <source>
        <dbReference type="SAM" id="MobiDB-lite"/>
    </source>
</evidence>
<reference key="1">
    <citation type="journal article" date="1991" name="J. Virol.">
        <title>Evolution of influenza A virus nucleoprotein genes: implications for the origins of H1N1 human and classical swine viruses.</title>
        <authorList>
            <person name="Gorman O.T."/>
            <person name="Bean W.J."/>
            <person name="Kawaoka Y."/>
            <person name="Donatelli I."/>
            <person name="Guo Y."/>
            <person name="Webster R.G."/>
        </authorList>
    </citation>
    <scope>NUCLEOTIDE SEQUENCE [GENOMIC RNA]</scope>
</reference>
<sequence length="498" mass="56250">MASQGTKRSYEQMETGGERQNATEIRASVGRMVGGIGRFYIQMCTELKLSDYEGRLIQNSITIERMVLSAFDERRNKYLEEHPSAGKDPKKTGGPIYRRRDGKWMRELILYDKEEIRRIWRQANNGEDATAGLTHLMIWHSNLNDATYQRTRALVRTGMDPRMCSLMQGSTLPRRSGAAGAAVKGVGTMVMELIRMVKRGINDRNFWRGENGRRTRIAYERMCNILKGKFQTAAQRAMMDQVRESRNPGNAEIEDLIFLARSALILRGSVAHKSCLPACVYGLAVASGYDFEREGYSLVGIDPFRLLQNSQVLSLIRPNENPAHKSQLVWMACHSAAFEDLRVSSFIRGTRVIPRGQLSTRGVQIASNENMETMDSSTLELRSRYWAIRTRSGGNTNQQRASAGQISVQPTFSVQRNLPFERATIMAAFTGNTEGRTSDMRTEIIRMMESARPEDVSFQGRGVFELSDEKATNPIVPSFDMSNEGSYFFGDNAEEYDN</sequence>
<accession>P26091</accession>
<gene>
    <name evidence="1" type="primary">NP</name>
</gene>